<sequence>MVFQVVCSTCGKDISHERYKLIIRKKSLKDVLVSVKNKCCRLKLSTQIEPQRNLTVQPLLDIN</sequence>
<dbReference type="EC" id="2.7.7.6"/>
<dbReference type="EMBL" id="L22579">
    <property type="protein sequence ID" value="AAA60816.1"/>
    <property type="molecule type" value="Genomic_DNA"/>
</dbReference>
<dbReference type="EMBL" id="Y16780">
    <property type="protein sequence ID" value="CAB54668.1"/>
    <property type="molecule type" value="Genomic_DNA"/>
</dbReference>
<dbReference type="PIR" id="T28506">
    <property type="entry name" value="T28506"/>
</dbReference>
<dbReference type="RefSeq" id="NP_042112.1">
    <property type="nucleotide sequence ID" value="NC_001611.1"/>
</dbReference>
<dbReference type="SMR" id="P0DSU8"/>
<dbReference type="GeneID" id="1486434"/>
<dbReference type="KEGG" id="vg:1486434"/>
<dbReference type="Proteomes" id="UP000111493">
    <property type="component" value="Segment"/>
</dbReference>
<dbReference type="Proteomes" id="UP000119805">
    <property type="component" value="Segment"/>
</dbReference>
<dbReference type="GO" id="GO:0000428">
    <property type="term" value="C:DNA-directed RNA polymerase complex"/>
    <property type="evidence" value="ECO:0007669"/>
    <property type="project" value="UniProtKB-KW"/>
</dbReference>
<dbReference type="GO" id="GO:0044423">
    <property type="term" value="C:virion component"/>
    <property type="evidence" value="ECO:0007669"/>
    <property type="project" value="UniProtKB-KW"/>
</dbReference>
<dbReference type="GO" id="GO:0003677">
    <property type="term" value="F:DNA binding"/>
    <property type="evidence" value="ECO:0007669"/>
    <property type="project" value="InterPro"/>
</dbReference>
<dbReference type="GO" id="GO:0003899">
    <property type="term" value="F:DNA-directed RNA polymerase activity"/>
    <property type="evidence" value="ECO:0007669"/>
    <property type="project" value="UniProtKB-EC"/>
</dbReference>
<dbReference type="GO" id="GO:0006351">
    <property type="term" value="P:DNA-templated transcription"/>
    <property type="evidence" value="ECO:0007669"/>
    <property type="project" value="InterPro"/>
</dbReference>
<dbReference type="InterPro" id="IPR008448">
    <property type="entry name" value="RNA_pol_7kDa_chordopoxvir"/>
</dbReference>
<dbReference type="Pfam" id="PF05864">
    <property type="entry name" value="Chordopox_RPO7"/>
    <property type="match status" value="1"/>
</dbReference>
<accession>P0DSU8</accession>
<accession>Q07047</accession>
<accession>Q9QNJ3</accession>
<feature type="chain" id="PRO_0000448137" description="DNA-directed RNA polymerase 7 kDa subunit">
    <location>
        <begin position="1"/>
        <end position="63"/>
    </location>
</feature>
<keyword id="KW-0240">DNA-directed RNA polymerase</keyword>
<keyword id="KW-0244">Early protein</keyword>
<keyword id="KW-0548">Nucleotidyltransferase</keyword>
<keyword id="KW-0804">Transcription</keyword>
<keyword id="KW-0808">Transferase</keyword>
<keyword id="KW-0946">Virion</keyword>
<name>RP07_VARV</name>
<gene>
    <name type="primary">OPG090</name>
    <name type="synonym">RPO7</name>
    <name type="ORF">H5_5R</name>
    <name type="ORF">I6R</name>
</gene>
<proteinExistence type="evidence at transcript level"/>
<protein>
    <recommendedName>
        <fullName>DNA-directed RNA polymerase 7 kDa subunit</fullName>
        <ecNumber>2.7.7.6</ecNumber>
    </recommendedName>
</protein>
<organism>
    <name type="scientific">Variola virus</name>
    <dbReference type="NCBI Taxonomy" id="10255"/>
    <lineage>
        <taxon>Viruses</taxon>
        <taxon>Varidnaviria</taxon>
        <taxon>Bamfordvirae</taxon>
        <taxon>Nucleocytoviricota</taxon>
        <taxon>Pokkesviricetes</taxon>
        <taxon>Chitovirales</taxon>
        <taxon>Poxviridae</taxon>
        <taxon>Chordopoxvirinae</taxon>
        <taxon>Orthopoxvirus</taxon>
    </lineage>
</organism>
<comment type="function">
    <text evidence="1">Part of the DNA-dependent RNA polymerase which catalyzes the transcription of viral DNA into RNA using the four ribonucleoside triphosphates as substrates. Responsible for the transcription of early, intermediate and late genes. DNA-dependent RNA polymerase associates with the early transcription factor (ETF), itself composed of OPG118 and OPG134, thereby allowing the early genes transcription. Late transcription, and probably also intermediate transcription, require newly synthesized RNA polymerase.</text>
</comment>
<comment type="catalytic activity">
    <reaction>
        <text>RNA(n) + a ribonucleoside 5'-triphosphate = RNA(n+1) + diphosphate</text>
        <dbReference type="Rhea" id="RHEA:21248"/>
        <dbReference type="Rhea" id="RHEA-COMP:14527"/>
        <dbReference type="Rhea" id="RHEA-COMP:17342"/>
        <dbReference type="ChEBI" id="CHEBI:33019"/>
        <dbReference type="ChEBI" id="CHEBI:61557"/>
        <dbReference type="ChEBI" id="CHEBI:140395"/>
        <dbReference type="EC" id="2.7.7.6"/>
    </reaction>
</comment>
<comment type="subunit">
    <text evidence="1">The DNA-dependent RNA polymerase (vRNAP) consists of eight subunits encoded by early viral genes and termed according to their apparent molecular masses Rpo147, Rpo132, Rpo35, Rpo30, Rpo22, Rpo19, Rpo18, and Rpo7. The same holoenzyme, with the addition of the transcription-specificity factor RAP94, is used for early gene expression.</text>
</comment>
<comment type="subcellular location">
    <subcellularLocation>
        <location evidence="1">Virion</location>
    </subcellularLocation>
    <text evidence="1">All the enzymes and other proteins required to synthesize early mRNAs are packaged within the virion core along with the DNA genome. This is necessary because viral early mRNAs are synthesized within minutes after virus entry into the cell and are extruded through pores in the core particle.</text>
</comment>
<comment type="induction">
    <text>Expressed in the early phase of the viral replicative cycle.</text>
</comment>
<comment type="similarity">
    <text evidence="2">Belongs to the poxviridae DNA-directed RNA polymerase 7 kDa subunit family.</text>
</comment>
<reference key="1">
    <citation type="journal article" date="1993" name="Nature">
        <title>Potential virulence determinants in terminal regions of variola smallpox virus genome.</title>
        <authorList>
            <person name="Massung R.F."/>
            <person name="Esposito J.J."/>
            <person name="Liu L.I."/>
            <person name="Qi J."/>
            <person name="Utterback T.R."/>
            <person name="Knight J.C."/>
            <person name="Aubin L."/>
            <person name="Yuran T.E."/>
            <person name="Parsons J.M."/>
            <person name="Loparev V.N."/>
            <person name="Selivanov N.A."/>
            <person name="Cavallaro K.F."/>
            <person name="Kerlavage A.R."/>
            <person name="Mahy B.W.J."/>
            <person name="Venter J.C."/>
        </authorList>
    </citation>
    <scope>NUCLEOTIDE SEQUENCE [GENOMIC DNA]</scope>
    <source>
        <strain>Bangladesh-1975</strain>
    </source>
</reference>
<reference key="2">
    <citation type="journal article" date="2000" name="Virology">
        <title>Alastrim smallpox variola minor virus genome DNA sequences.</title>
        <authorList>
            <person name="Shchelkunov S.N."/>
            <person name="Totmenin A.V."/>
            <person name="Loparev V.N."/>
            <person name="Safronov P.F."/>
            <person name="Gutorov V.V."/>
            <person name="Chizhikov V.E."/>
            <person name="Knight J.C."/>
            <person name="Parsons J.M."/>
            <person name="Massung R.F."/>
            <person name="Esposito J.J."/>
        </authorList>
    </citation>
    <scope>NUCLEOTIDE SEQUENCE [LARGE SCALE GENOMIC DNA]</scope>
    <source>
        <strain>Garcia-1966</strain>
    </source>
</reference>
<organismHost>
    <name type="scientific">Homo sapiens</name>
    <name type="common">Human</name>
    <dbReference type="NCBI Taxonomy" id="9606"/>
</organismHost>
<evidence type="ECO:0000250" key="1">
    <source>
        <dbReference type="UniProtKB" id="P68317"/>
    </source>
</evidence>
<evidence type="ECO:0000305" key="2"/>